<keyword id="KW-0479">Metal-binding</keyword>
<keyword id="KW-1185">Reference proteome</keyword>
<keyword id="KW-0687">Ribonucleoprotein</keyword>
<keyword id="KW-0689">Ribosomal protein</keyword>
<keyword id="KW-0862">Zinc</keyword>
<keyword id="KW-0863">Zinc-finger</keyword>
<gene>
    <name type="primary">RPL37a</name>
    <name type="ORF">OSTLU_13231</name>
</gene>
<sequence length="92" mass="10170">MAKRTKKVGIVGKYGTRYGASLRKVVKKQEVSQHSKFFCDFCGKYGMKRKAVGIWSCKGCNKTKAGGAYSLNTGGSVTVRSTIRRLREATEK</sequence>
<evidence type="ECO:0000305" key="1"/>
<dbReference type="EMBL" id="CP000594">
    <property type="protein sequence ID" value="ABO99475.1"/>
    <property type="molecule type" value="Genomic_DNA"/>
</dbReference>
<dbReference type="RefSeq" id="XP_001421182.1">
    <property type="nucleotide sequence ID" value="XM_001421145.1"/>
</dbReference>
<dbReference type="SMR" id="A4S6Z4"/>
<dbReference type="STRING" id="436017.A4S6Z4"/>
<dbReference type="EnsemblPlants" id="ABO99475">
    <property type="protein sequence ID" value="ABO99475"/>
    <property type="gene ID" value="OSTLU_13231"/>
</dbReference>
<dbReference type="GeneID" id="5005370"/>
<dbReference type="Gramene" id="ABO99475">
    <property type="protein sequence ID" value="ABO99475"/>
    <property type="gene ID" value="OSTLU_13231"/>
</dbReference>
<dbReference type="KEGG" id="olu:OSTLU_13231"/>
<dbReference type="eggNOG" id="KOG0402">
    <property type="taxonomic scope" value="Eukaryota"/>
</dbReference>
<dbReference type="HOGENOM" id="CLU_141199_1_0_1"/>
<dbReference type="OMA" id="ESAHAHC"/>
<dbReference type="OrthoDB" id="564175at2759"/>
<dbReference type="Proteomes" id="UP000001568">
    <property type="component" value="Chromosome 14"/>
</dbReference>
<dbReference type="GO" id="GO:1990904">
    <property type="term" value="C:ribonucleoprotein complex"/>
    <property type="evidence" value="ECO:0007669"/>
    <property type="project" value="UniProtKB-KW"/>
</dbReference>
<dbReference type="GO" id="GO:0005840">
    <property type="term" value="C:ribosome"/>
    <property type="evidence" value="ECO:0007669"/>
    <property type="project" value="UniProtKB-KW"/>
</dbReference>
<dbReference type="GO" id="GO:0003735">
    <property type="term" value="F:structural constituent of ribosome"/>
    <property type="evidence" value="ECO:0007669"/>
    <property type="project" value="InterPro"/>
</dbReference>
<dbReference type="GO" id="GO:0008270">
    <property type="term" value="F:zinc ion binding"/>
    <property type="evidence" value="ECO:0007669"/>
    <property type="project" value="UniProtKB-KW"/>
</dbReference>
<dbReference type="GO" id="GO:0006412">
    <property type="term" value="P:translation"/>
    <property type="evidence" value="ECO:0007669"/>
    <property type="project" value="InterPro"/>
</dbReference>
<dbReference type="FunFam" id="2.20.25.30:FF:000002">
    <property type="entry name" value="60S ribosomal protein L37a"/>
    <property type="match status" value="1"/>
</dbReference>
<dbReference type="Gene3D" id="2.20.25.30">
    <property type="match status" value="1"/>
</dbReference>
<dbReference type="HAMAP" id="MF_00327">
    <property type="entry name" value="Ribosomal_eL43"/>
    <property type="match status" value="1"/>
</dbReference>
<dbReference type="InterPro" id="IPR011331">
    <property type="entry name" value="Ribosomal_eL37/eL43"/>
</dbReference>
<dbReference type="InterPro" id="IPR002674">
    <property type="entry name" value="Ribosomal_eL43"/>
</dbReference>
<dbReference type="InterPro" id="IPR050522">
    <property type="entry name" value="Ribosomal_protein_eL43"/>
</dbReference>
<dbReference type="InterPro" id="IPR011332">
    <property type="entry name" value="Ribosomal_zn-bd"/>
</dbReference>
<dbReference type="NCBIfam" id="TIGR00280">
    <property type="entry name" value="eL43_euk_arch"/>
    <property type="match status" value="1"/>
</dbReference>
<dbReference type="PANTHER" id="PTHR48129">
    <property type="entry name" value="60S RIBOSOMAL PROTEIN L37A"/>
    <property type="match status" value="1"/>
</dbReference>
<dbReference type="PANTHER" id="PTHR48129:SF1">
    <property type="entry name" value="LARGE RIBOSOMAL SUBUNIT PROTEIN EL43"/>
    <property type="match status" value="1"/>
</dbReference>
<dbReference type="Pfam" id="PF01780">
    <property type="entry name" value="Ribosomal_L37ae"/>
    <property type="match status" value="1"/>
</dbReference>
<dbReference type="SUPFAM" id="SSF57829">
    <property type="entry name" value="Zn-binding ribosomal proteins"/>
    <property type="match status" value="1"/>
</dbReference>
<protein>
    <recommendedName>
        <fullName evidence="1">Large ribosomal subunit protein eL43</fullName>
    </recommendedName>
    <alternativeName>
        <fullName>60S ribosomal protein L37a</fullName>
    </alternativeName>
</protein>
<reference key="1">
    <citation type="journal article" date="2007" name="Proc. Natl. Acad. Sci. U.S.A.">
        <title>The tiny eukaryote Ostreococcus provides genomic insights into the paradox of plankton speciation.</title>
        <authorList>
            <person name="Palenik B."/>
            <person name="Grimwood J."/>
            <person name="Aerts A."/>
            <person name="Rouze P."/>
            <person name="Salamov A."/>
            <person name="Putnam N."/>
            <person name="Dupont C."/>
            <person name="Jorgensen R."/>
            <person name="Derelle E."/>
            <person name="Rombauts S."/>
            <person name="Zhou K."/>
            <person name="Otillar R."/>
            <person name="Merchant S.S."/>
            <person name="Podell S."/>
            <person name="Gaasterland T."/>
            <person name="Napoli C."/>
            <person name="Gendler K."/>
            <person name="Manuell A."/>
            <person name="Tai V."/>
            <person name="Vallon O."/>
            <person name="Piganeau G."/>
            <person name="Jancek S."/>
            <person name="Heijde M."/>
            <person name="Jabbari K."/>
            <person name="Bowler C."/>
            <person name="Lohr M."/>
            <person name="Robbens S."/>
            <person name="Werner G."/>
            <person name="Dubchak I."/>
            <person name="Pazour G.J."/>
            <person name="Ren Q."/>
            <person name="Paulsen I."/>
            <person name="Delwiche C."/>
            <person name="Schmutz J."/>
            <person name="Rokhsar D."/>
            <person name="Van de Peer Y."/>
            <person name="Moreau H."/>
            <person name="Grigoriev I.V."/>
        </authorList>
    </citation>
    <scope>NUCLEOTIDE SEQUENCE [LARGE SCALE GENOMIC DNA]</scope>
    <source>
        <strain>CCE9901</strain>
    </source>
</reference>
<name>RL37A_OSTLU</name>
<feature type="chain" id="PRO_0000308952" description="Large ribosomal subunit protein eL43">
    <location>
        <begin position="1"/>
        <end position="92"/>
    </location>
</feature>
<feature type="zinc finger region" description="C4-type">
    <location>
        <begin position="39"/>
        <end position="60"/>
    </location>
</feature>
<comment type="similarity">
    <text evidence="1">Belongs to the eukaryotic ribosomal protein eL43 family.</text>
</comment>
<organism>
    <name type="scientific">Ostreococcus lucimarinus (strain CCE9901)</name>
    <dbReference type="NCBI Taxonomy" id="436017"/>
    <lineage>
        <taxon>Eukaryota</taxon>
        <taxon>Viridiplantae</taxon>
        <taxon>Chlorophyta</taxon>
        <taxon>Mamiellophyceae</taxon>
        <taxon>Mamiellales</taxon>
        <taxon>Bathycoccaceae</taxon>
        <taxon>Ostreococcus</taxon>
    </lineage>
</organism>
<proteinExistence type="inferred from homology"/>
<accession>A4S6Z4</accession>